<proteinExistence type="inferred from homology"/>
<feature type="chain" id="PRO_0000241271" description="Aspartyl/glutamyl-tRNA(Asn/Gln) amidotransferase subunit B">
    <location>
        <begin position="1"/>
        <end position="483"/>
    </location>
</feature>
<gene>
    <name evidence="1" type="primary">gatB</name>
    <name type="ordered locus">RF_1130</name>
</gene>
<sequence>MAYIEGNTGKWEYIIGLEIHAQISSKSKLFSGSSTIFAANPNSQVSYVDAAMPGMLPVLNKHCVYQAIKTGLGLKAKINKYSVFDRKNYFYADLPQGYQISQFYYPIVQNGTMEIPTSTGDLKTIRINRLHLEQDAGKSMHDQSPHYSFIDLNRAGIGLMEIVTEPDISSPDEAAEFVKKLRNLLRYIGSCDGDMEKGSMRCDANISVRRSGEPLGTRCEIKNINSIRNIIKAIEFEAKRQVDLLENGEAIIQETRLFNADSGETKTMRLKEEALDYRYFPDPDLLPLVISDELINELKANLPELPDQKIEKYTKEFGLSKYDAEVIVADESVAEYFEKAANECNPKMLTNWLTSELFGQLNKASIGINECKITPSNFAKLVKLIENDTISGKIAKTVFEIMFETGKAPDKIVEEKGLVQVSDNNVLNTVIDEVIAENPESVEGYKRGKDKLFGFFVGQVMKKTGGKANPTLVNQLLKDKLDS</sequence>
<reference key="1">
    <citation type="journal article" date="2005" name="PLoS Biol.">
        <title>The genome sequence of Rickettsia felis identifies the first putative conjugative plasmid in an obligate intracellular parasite.</title>
        <authorList>
            <person name="Ogata H."/>
            <person name="Renesto P."/>
            <person name="Audic S."/>
            <person name="Robert C."/>
            <person name="Blanc G."/>
            <person name="Fournier P.-E."/>
            <person name="Parinello H."/>
            <person name="Claverie J.-M."/>
            <person name="Raoult D."/>
        </authorList>
    </citation>
    <scope>NUCLEOTIDE SEQUENCE [LARGE SCALE GENOMIC DNA]</scope>
    <source>
        <strain>ATCC VR-1525 / URRWXCal2</strain>
    </source>
</reference>
<protein>
    <recommendedName>
        <fullName evidence="1">Aspartyl/glutamyl-tRNA(Asn/Gln) amidotransferase subunit B</fullName>
        <shortName evidence="1">Asp/Glu-ADT subunit B</shortName>
        <ecNumber evidence="1">6.3.5.-</ecNumber>
    </recommendedName>
</protein>
<accession>Q4UKF0</accession>
<evidence type="ECO:0000255" key="1">
    <source>
        <dbReference type="HAMAP-Rule" id="MF_00121"/>
    </source>
</evidence>
<name>GATB_RICFE</name>
<keyword id="KW-0067">ATP-binding</keyword>
<keyword id="KW-0436">Ligase</keyword>
<keyword id="KW-0547">Nucleotide-binding</keyword>
<keyword id="KW-0648">Protein biosynthesis</keyword>
<dbReference type="EC" id="6.3.5.-" evidence="1"/>
<dbReference type="EMBL" id="CP000053">
    <property type="protein sequence ID" value="AAY61981.1"/>
    <property type="molecule type" value="Genomic_DNA"/>
</dbReference>
<dbReference type="SMR" id="Q4UKF0"/>
<dbReference type="STRING" id="315456.RF_1130"/>
<dbReference type="KEGG" id="rfe:RF_1130"/>
<dbReference type="eggNOG" id="COG0064">
    <property type="taxonomic scope" value="Bacteria"/>
</dbReference>
<dbReference type="HOGENOM" id="CLU_019240_0_0_5"/>
<dbReference type="OrthoDB" id="9804078at2"/>
<dbReference type="Proteomes" id="UP000008548">
    <property type="component" value="Chromosome"/>
</dbReference>
<dbReference type="GO" id="GO:0050566">
    <property type="term" value="F:asparaginyl-tRNA synthase (glutamine-hydrolyzing) activity"/>
    <property type="evidence" value="ECO:0007669"/>
    <property type="project" value="RHEA"/>
</dbReference>
<dbReference type="GO" id="GO:0005524">
    <property type="term" value="F:ATP binding"/>
    <property type="evidence" value="ECO:0007669"/>
    <property type="project" value="UniProtKB-KW"/>
</dbReference>
<dbReference type="GO" id="GO:0050567">
    <property type="term" value="F:glutaminyl-tRNA synthase (glutamine-hydrolyzing) activity"/>
    <property type="evidence" value="ECO:0007669"/>
    <property type="project" value="UniProtKB-UniRule"/>
</dbReference>
<dbReference type="GO" id="GO:0070681">
    <property type="term" value="P:glutaminyl-tRNAGln biosynthesis via transamidation"/>
    <property type="evidence" value="ECO:0007669"/>
    <property type="project" value="TreeGrafter"/>
</dbReference>
<dbReference type="GO" id="GO:0006412">
    <property type="term" value="P:translation"/>
    <property type="evidence" value="ECO:0007669"/>
    <property type="project" value="UniProtKB-UniRule"/>
</dbReference>
<dbReference type="FunFam" id="1.10.10.410:FF:000001">
    <property type="entry name" value="Aspartyl/glutamyl-tRNA(Asn/Gln) amidotransferase subunit B"/>
    <property type="match status" value="1"/>
</dbReference>
<dbReference type="Gene3D" id="1.10.10.410">
    <property type="match status" value="1"/>
</dbReference>
<dbReference type="Gene3D" id="1.10.150.380">
    <property type="entry name" value="GatB domain, N-terminal subdomain"/>
    <property type="match status" value="1"/>
</dbReference>
<dbReference type="HAMAP" id="MF_00121">
    <property type="entry name" value="GatB"/>
    <property type="match status" value="1"/>
</dbReference>
<dbReference type="InterPro" id="IPR017959">
    <property type="entry name" value="Asn/Gln-tRNA_amidoTrfase_suB/E"/>
</dbReference>
<dbReference type="InterPro" id="IPR006075">
    <property type="entry name" value="Asn/Gln-tRNA_Trfase_suB/E_cat"/>
</dbReference>
<dbReference type="InterPro" id="IPR018027">
    <property type="entry name" value="Asn/Gln_amidotransferase"/>
</dbReference>
<dbReference type="InterPro" id="IPR003789">
    <property type="entry name" value="Asn/Gln_tRNA_amidoTrase-B-like"/>
</dbReference>
<dbReference type="InterPro" id="IPR004413">
    <property type="entry name" value="GatB"/>
</dbReference>
<dbReference type="InterPro" id="IPR042114">
    <property type="entry name" value="GatB_C_1"/>
</dbReference>
<dbReference type="InterPro" id="IPR023168">
    <property type="entry name" value="GatB_Yqey_C_2"/>
</dbReference>
<dbReference type="InterPro" id="IPR017958">
    <property type="entry name" value="Gln-tRNA_amidoTrfase_suB_CS"/>
</dbReference>
<dbReference type="InterPro" id="IPR014746">
    <property type="entry name" value="Gln_synth/guanido_kin_cat_dom"/>
</dbReference>
<dbReference type="NCBIfam" id="TIGR00133">
    <property type="entry name" value="gatB"/>
    <property type="match status" value="1"/>
</dbReference>
<dbReference type="NCBIfam" id="NF004012">
    <property type="entry name" value="PRK05477.1-2"/>
    <property type="match status" value="1"/>
</dbReference>
<dbReference type="NCBIfam" id="NF004014">
    <property type="entry name" value="PRK05477.1-4"/>
    <property type="match status" value="1"/>
</dbReference>
<dbReference type="NCBIfam" id="NF004015">
    <property type="entry name" value="PRK05477.1-5"/>
    <property type="match status" value="1"/>
</dbReference>
<dbReference type="PANTHER" id="PTHR11659">
    <property type="entry name" value="GLUTAMYL-TRNA GLN AMIDOTRANSFERASE SUBUNIT B MITOCHONDRIAL AND PROKARYOTIC PET112-RELATED"/>
    <property type="match status" value="1"/>
</dbReference>
<dbReference type="PANTHER" id="PTHR11659:SF0">
    <property type="entry name" value="GLUTAMYL-TRNA(GLN) AMIDOTRANSFERASE SUBUNIT B, MITOCHONDRIAL"/>
    <property type="match status" value="1"/>
</dbReference>
<dbReference type="Pfam" id="PF02934">
    <property type="entry name" value="GatB_N"/>
    <property type="match status" value="1"/>
</dbReference>
<dbReference type="Pfam" id="PF02637">
    <property type="entry name" value="GatB_Yqey"/>
    <property type="match status" value="1"/>
</dbReference>
<dbReference type="SMART" id="SM00845">
    <property type="entry name" value="GatB_Yqey"/>
    <property type="match status" value="1"/>
</dbReference>
<dbReference type="SUPFAM" id="SSF89095">
    <property type="entry name" value="GatB/YqeY motif"/>
    <property type="match status" value="1"/>
</dbReference>
<dbReference type="SUPFAM" id="SSF55931">
    <property type="entry name" value="Glutamine synthetase/guanido kinase"/>
    <property type="match status" value="1"/>
</dbReference>
<dbReference type="PROSITE" id="PS01234">
    <property type="entry name" value="GATB"/>
    <property type="match status" value="1"/>
</dbReference>
<comment type="function">
    <text evidence="1">Allows the formation of correctly charged Asn-tRNA(Asn) or Gln-tRNA(Gln) through the transamidation of misacylated Asp-tRNA(Asn) or Glu-tRNA(Gln) in organisms which lack either or both of asparaginyl-tRNA or glutaminyl-tRNA synthetases. The reaction takes place in the presence of glutamine and ATP through an activated phospho-Asp-tRNA(Asn) or phospho-Glu-tRNA(Gln).</text>
</comment>
<comment type="catalytic activity">
    <reaction evidence="1">
        <text>L-glutamyl-tRNA(Gln) + L-glutamine + ATP + H2O = L-glutaminyl-tRNA(Gln) + L-glutamate + ADP + phosphate + H(+)</text>
        <dbReference type="Rhea" id="RHEA:17521"/>
        <dbReference type="Rhea" id="RHEA-COMP:9681"/>
        <dbReference type="Rhea" id="RHEA-COMP:9684"/>
        <dbReference type="ChEBI" id="CHEBI:15377"/>
        <dbReference type="ChEBI" id="CHEBI:15378"/>
        <dbReference type="ChEBI" id="CHEBI:29985"/>
        <dbReference type="ChEBI" id="CHEBI:30616"/>
        <dbReference type="ChEBI" id="CHEBI:43474"/>
        <dbReference type="ChEBI" id="CHEBI:58359"/>
        <dbReference type="ChEBI" id="CHEBI:78520"/>
        <dbReference type="ChEBI" id="CHEBI:78521"/>
        <dbReference type="ChEBI" id="CHEBI:456216"/>
    </reaction>
</comment>
<comment type="catalytic activity">
    <reaction evidence="1">
        <text>L-aspartyl-tRNA(Asn) + L-glutamine + ATP + H2O = L-asparaginyl-tRNA(Asn) + L-glutamate + ADP + phosphate + 2 H(+)</text>
        <dbReference type="Rhea" id="RHEA:14513"/>
        <dbReference type="Rhea" id="RHEA-COMP:9674"/>
        <dbReference type="Rhea" id="RHEA-COMP:9677"/>
        <dbReference type="ChEBI" id="CHEBI:15377"/>
        <dbReference type="ChEBI" id="CHEBI:15378"/>
        <dbReference type="ChEBI" id="CHEBI:29985"/>
        <dbReference type="ChEBI" id="CHEBI:30616"/>
        <dbReference type="ChEBI" id="CHEBI:43474"/>
        <dbReference type="ChEBI" id="CHEBI:58359"/>
        <dbReference type="ChEBI" id="CHEBI:78515"/>
        <dbReference type="ChEBI" id="CHEBI:78516"/>
        <dbReference type="ChEBI" id="CHEBI:456216"/>
    </reaction>
</comment>
<comment type="subunit">
    <text evidence="1">Heterotrimer of A, B and C subunits.</text>
</comment>
<comment type="similarity">
    <text evidence="1">Belongs to the GatB/GatE family. GatB subfamily.</text>
</comment>
<organism>
    <name type="scientific">Rickettsia felis (strain ATCC VR-1525 / URRWXCal2)</name>
    <name type="common">Rickettsia azadi</name>
    <dbReference type="NCBI Taxonomy" id="315456"/>
    <lineage>
        <taxon>Bacteria</taxon>
        <taxon>Pseudomonadati</taxon>
        <taxon>Pseudomonadota</taxon>
        <taxon>Alphaproteobacteria</taxon>
        <taxon>Rickettsiales</taxon>
        <taxon>Rickettsiaceae</taxon>
        <taxon>Rickettsieae</taxon>
        <taxon>Rickettsia</taxon>
        <taxon>spotted fever group</taxon>
    </lineage>
</organism>